<comment type="function">
    <text>Component of the NuA4 histone acetyltransferase complex which is involved in transcriptional activation of selected genes principally by acetylation of nucleosomal histone H4 and H2A. The NuA4 complex is also involved in DNA repair.</text>
</comment>
<comment type="subunit">
    <text evidence="5">Component of the NuA4 histone acetyltransferase complex composed of at least ACT1, ARP4, YAF9, VID21, SWC4, EAF3, EAF5, EAF6, EAF7, EPL1, ESA1, TRA1 and YNG2.</text>
</comment>
<comment type="subcellular location">
    <subcellularLocation>
        <location evidence="3">Nucleus</location>
    </subcellularLocation>
</comment>
<comment type="miscellaneous">
    <text evidence="4">Present with 300 molecules/cell in log phase SD medium.</text>
</comment>
<comment type="similarity">
    <text evidence="6">Belongs to the EAF7 family.</text>
</comment>
<protein>
    <recommendedName>
        <fullName>Chromatin modification-related protein EAF7</fullName>
    </recommendedName>
    <alternativeName>
        <fullName>ESA1-associated factor 7</fullName>
    </alternativeName>
</protein>
<accession>P53911</accession>
<accession>D6W146</accession>
<evidence type="ECO:0000255" key="1"/>
<evidence type="ECO:0000256" key="2">
    <source>
        <dbReference type="SAM" id="MobiDB-lite"/>
    </source>
</evidence>
<evidence type="ECO:0000269" key="3">
    <source>
    </source>
</evidence>
<evidence type="ECO:0000269" key="4">
    <source>
    </source>
</evidence>
<evidence type="ECO:0000269" key="5">
    <source>
    </source>
</evidence>
<evidence type="ECO:0000305" key="6"/>
<evidence type="ECO:0007744" key="7">
    <source>
    </source>
</evidence>
<evidence type="ECO:0007744" key="8">
    <source>
    </source>
</evidence>
<evidence type="ECO:0007829" key="9">
    <source>
        <dbReference type="PDB" id="8I3G"/>
    </source>
</evidence>
<keyword id="KW-0002">3D-structure</keyword>
<keyword id="KW-0156">Chromatin regulator</keyword>
<keyword id="KW-0175">Coiled coil</keyword>
<keyword id="KW-0227">DNA damage</keyword>
<keyword id="KW-0234">DNA repair</keyword>
<keyword id="KW-0539">Nucleus</keyword>
<keyword id="KW-0597">Phosphoprotein</keyword>
<keyword id="KW-1185">Reference proteome</keyword>
<keyword id="KW-0804">Transcription</keyword>
<keyword id="KW-0805">Transcription regulation</keyword>
<dbReference type="EMBL" id="Z46843">
    <property type="protein sequence ID" value="CAA86889.1"/>
    <property type="molecule type" value="Genomic_DNA"/>
</dbReference>
<dbReference type="EMBL" id="Z71412">
    <property type="protein sequence ID" value="CAA96018.1"/>
    <property type="molecule type" value="Genomic_DNA"/>
</dbReference>
<dbReference type="EMBL" id="BK006947">
    <property type="protein sequence ID" value="DAA10412.1"/>
    <property type="molecule type" value="Genomic_DNA"/>
</dbReference>
<dbReference type="PIR" id="S55147">
    <property type="entry name" value="S55147"/>
</dbReference>
<dbReference type="RefSeq" id="NP_014263.1">
    <property type="nucleotide sequence ID" value="NM_001182974.1"/>
</dbReference>
<dbReference type="PDB" id="8I3G">
    <property type="method" value="X-ray"/>
    <property type="resolution" value="2.40 A"/>
    <property type="chains" value="C/D=108-143"/>
</dbReference>
<dbReference type="PDBsum" id="8I3G"/>
<dbReference type="SMR" id="P53911"/>
<dbReference type="BioGRID" id="35690">
    <property type="interactions" value="735"/>
</dbReference>
<dbReference type="ComplexPortal" id="CPX-3155">
    <property type="entry name" value="NuA4 histone acetyltransferase complex"/>
</dbReference>
<dbReference type="ComplexPortal" id="CPX-3184">
    <property type="entry name" value="EAF5-7-3 nucleosome disassembly/reassembly complex"/>
</dbReference>
<dbReference type="FunCoup" id="P53911">
    <property type="interactions" value="105"/>
</dbReference>
<dbReference type="IntAct" id="P53911">
    <property type="interactions" value="15"/>
</dbReference>
<dbReference type="MINT" id="P53911"/>
<dbReference type="STRING" id="4932.YNL136W"/>
<dbReference type="iPTMnet" id="P53911"/>
<dbReference type="PaxDb" id="4932-YNL136W"/>
<dbReference type="PeptideAtlas" id="P53911"/>
<dbReference type="EnsemblFungi" id="YNL136W_mRNA">
    <property type="protein sequence ID" value="YNL136W"/>
    <property type="gene ID" value="YNL136W"/>
</dbReference>
<dbReference type="GeneID" id="855586"/>
<dbReference type="KEGG" id="sce:YNL136W"/>
<dbReference type="AGR" id="SGD:S000005080"/>
<dbReference type="SGD" id="S000005080">
    <property type="gene designation" value="EAF7"/>
</dbReference>
<dbReference type="VEuPathDB" id="FungiDB:YNL136W"/>
<dbReference type="eggNOG" id="KOG4051">
    <property type="taxonomic scope" value="Eukaryota"/>
</dbReference>
<dbReference type="HOGENOM" id="CLU_053191_0_0_1"/>
<dbReference type="InParanoid" id="P53911"/>
<dbReference type="OMA" id="PKITHNE"/>
<dbReference type="OrthoDB" id="5595141at2759"/>
<dbReference type="BioCyc" id="YEAST:G3O-33155-MONOMER"/>
<dbReference type="BioGRID-ORCS" id="855586">
    <property type="hits" value="0 hits in 10 CRISPR screens"/>
</dbReference>
<dbReference type="PRO" id="PR:P53911"/>
<dbReference type="Proteomes" id="UP000002311">
    <property type="component" value="Chromosome XIV"/>
</dbReference>
<dbReference type="RNAct" id="P53911">
    <property type="molecule type" value="protein"/>
</dbReference>
<dbReference type="GO" id="GO:0035267">
    <property type="term" value="C:NuA4 histone acetyltransferase complex"/>
    <property type="evidence" value="ECO:0000314"/>
    <property type="project" value="SGD"/>
</dbReference>
<dbReference type="GO" id="GO:1990453">
    <property type="term" value="C:nucleosome disassembly/reassembly complex"/>
    <property type="evidence" value="ECO:0000353"/>
    <property type="project" value="ComplexPortal"/>
</dbReference>
<dbReference type="GO" id="GO:0005634">
    <property type="term" value="C:nucleus"/>
    <property type="evidence" value="ECO:0000314"/>
    <property type="project" value="ComplexPortal"/>
</dbReference>
<dbReference type="GO" id="GO:0006281">
    <property type="term" value="P:DNA repair"/>
    <property type="evidence" value="ECO:0000314"/>
    <property type="project" value="SGD"/>
</dbReference>
<dbReference type="GO" id="GO:0006335">
    <property type="term" value="P:DNA replication-dependent chromatin assembly"/>
    <property type="evidence" value="ECO:0000315"/>
    <property type="project" value="ComplexPortal"/>
</dbReference>
<dbReference type="GO" id="GO:0006351">
    <property type="term" value="P:DNA-templated transcription"/>
    <property type="evidence" value="ECO:0000303"/>
    <property type="project" value="ComplexPortal"/>
</dbReference>
<dbReference type="GO" id="GO:0006337">
    <property type="term" value="P:nucleosome disassembly"/>
    <property type="evidence" value="ECO:0000315"/>
    <property type="project" value="ComplexPortal"/>
</dbReference>
<dbReference type="GO" id="GO:0032968">
    <property type="term" value="P:positive regulation of transcription elongation by RNA polymerase II"/>
    <property type="evidence" value="ECO:0000315"/>
    <property type="project" value="ComplexPortal"/>
</dbReference>
<dbReference type="GO" id="GO:0006357">
    <property type="term" value="P:regulation of transcription by RNA polymerase II"/>
    <property type="evidence" value="ECO:0000315"/>
    <property type="project" value="SGD"/>
</dbReference>
<dbReference type="InterPro" id="IPR012423">
    <property type="entry name" value="Eaf7/MRGBP"/>
</dbReference>
<dbReference type="PANTHER" id="PTHR13581">
    <property type="entry name" value="MRG-BINDING PROTEIN"/>
    <property type="match status" value="1"/>
</dbReference>
<dbReference type="PANTHER" id="PTHR13581:SF5">
    <property type="entry name" value="MRG_MORF4L-BINDING PROTEIN"/>
    <property type="match status" value="1"/>
</dbReference>
<dbReference type="Pfam" id="PF07904">
    <property type="entry name" value="Eaf7"/>
    <property type="match status" value="1"/>
</dbReference>
<reference key="1">
    <citation type="journal article" date="1995" name="Yeast">
        <title>A 43.5 kb segment of yeast chromosome XIV, which contains MFA2, MEP2, CAP/SRV2, NAM9, FKB1/FPR1/RBP1, MOM22 and CPT1, predicts an adenosine deaminase gene and 14 new open reading frames.</title>
        <authorList>
            <person name="Mallet L."/>
            <person name="Bussereau F."/>
            <person name="Jacquet M."/>
        </authorList>
    </citation>
    <scope>NUCLEOTIDE SEQUENCE [LARGE SCALE GENOMIC DNA]</scope>
    <source>
        <strain>ATCC 204508 / S288c</strain>
    </source>
</reference>
<reference key="2">
    <citation type="journal article" date="2014" name="G3 (Bethesda)">
        <title>The reference genome sequence of Saccharomyces cerevisiae: Then and now.</title>
        <authorList>
            <person name="Engel S.R."/>
            <person name="Dietrich F.S."/>
            <person name="Fisk D.G."/>
            <person name="Binkley G."/>
            <person name="Balakrishnan R."/>
            <person name="Costanzo M.C."/>
            <person name="Dwight S.S."/>
            <person name="Hitz B.C."/>
            <person name="Karra K."/>
            <person name="Nash R.S."/>
            <person name="Weng S."/>
            <person name="Wong E.D."/>
            <person name="Lloyd P."/>
            <person name="Skrzypek M.S."/>
            <person name="Miyasato S.R."/>
            <person name="Simison M."/>
            <person name="Cherry J.M."/>
        </authorList>
    </citation>
    <scope>GENOME REANNOTATION</scope>
    <source>
        <strain>ATCC 204508 / S288c</strain>
    </source>
</reference>
<reference key="3">
    <citation type="journal article" date="1997" name="Nature">
        <title>The nucleotide sequence of Saccharomyces cerevisiae chromosome XIV and its evolutionary implications.</title>
        <authorList>
            <person name="Philippsen P."/>
            <person name="Kleine K."/>
            <person name="Poehlmann R."/>
            <person name="Duesterhoeft A."/>
            <person name="Hamberg K."/>
            <person name="Hegemann J.H."/>
            <person name="Obermaier B."/>
            <person name="Urrestarazu L.A."/>
            <person name="Aert R."/>
            <person name="Albermann K."/>
            <person name="Altmann R."/>
            <person name="Andre B."/>
            <person name="Baladron V."/>
            <person name="Ballesta J.P.G."/>
            <person name="Becam A.-M."/>
            <person name="Beinhauer J.D."/>
            <person name="Boskovic J."/>
            <person name="Buitrago M.J."/>
            <person name="Bussereau F."/>
            <person name="Coster F."/>
            <person name="Crouzet M."/>
            <person name="D'Angelo M."/>
            <person name="Dal Pero F."/>
            <person name="De Antoni A."/>
            <person name="del Rey F."/>
            <person name="Doignon F."/>
            <person name="Domdey H."/>
            <person name="Dubois E."/>
            <person name="Fiedler T.A."/>
            <person name="Fleig U."/>
            <person name="Floeth M."/>
            <person name="Fritz C."/>
            <person name="Gaillardin C."/>
            <person name="Garcia-Cantalejo J.M."/>
            <person name="Glansdorff N."/>
            <person name="Goffeau A."/>
            <person name="Gueldener U."/>
            <person name="Herbert C.J."/>
            <person name="Heumann K."/>
            <person name="Heuss-Neitzel D."/>
            <person name="Hilbert H."/>
            <person name="Hinni K."/>
            <person name="Iraqui Houssaini I."/>
            <person name="Jacquet M."/>
            <person name="Jimenez A."/>
            <person name="Jonniaux J.-L."/>
            <person name="Karpfinger-Hartl L."/>
            <person name="Lanfranchi G."/>
            <person name="Lepingle A."/>
            <person name="Levesque H."/>
            <person name="Lyck R."/>
            <person name="Maftahi M."/>
            <person name="Mallet L."/>
            <person name="Maurer C.T.C."/>
            <person name="Messenguy F."/>
            <person name="Mewes H.-W."/>
            <person name="Moestl D."/>
            <person name="Nasr F."/>
            <person name="Nicaud J.-M."/>
            <person name="Niedenthal R.K."/>
            <person name="Pandolfo D."/>
            <person name="Pierard A."/>
            <person name="Piravandi E."/>
            <person name="Planta R.J."/>
            <person name="Pohl T.M."/>
            <person name="Purnelle B."/>
            <person name="Rebischung C."/>
            <person name="Remacha M.A."/>
            <person name="Revuelta J.L."/>
            <person name="Rinke M."/>
            <person name="Saiz J.E."/>
            <person name="Sartorello F."/>
            <person name="Scherens B."/>
            <person name="Sen-Gupta M."/>
            <person name="Soler-Mira A."/>
            <person name="Urbanus J.H.M."/>
            <person name="Valle G."/>
            <person name="Van Dyck L."/>
            <person name="Verhasselt P."/>
            <person name="Vierendeels F."/>
            <person name="Vissers S."/>
            <person name="Voet M."/>
            <person name="Volckaert G."/>
            <person name="Wach A."/>
            <person name="Wambutt R."/>
            <person name="Wedler H."/>
            <person name="Zollner A."/>
            <person name="Hani J."/>
        </authorList>
    </citation>
    <scope>NUCLEOTIDE SEQUENCE [LARGE SCALE GENOMIC DNA]</scope>
    <source>
        <strain>ATCC 204508 / S288c</strain>
    </source>
</reference>
<reference key="4">
    <citation type="journal article" date="2003" name="Nature">
        <title>Global analysis of protein localization in budding yeast.</title>
        <authorList>
            <person name="Huh W.-K."/>
            <person name="Falvo J.V."/>
            <person name="Gerke L.C."/>
            <person name="Carroll A.S."/>
            <person name="Howson R.W."/>
            <person name="Weissman J.S."/>
            <person name="O'Shea E.K."/>
        </authorList>
    </citation>
    <scope>SUBCELLULAR LOCATION [LARGE SCALE ANALYSIS]</scope>
</reference>
<reference key="5">
    <citation type="journal article" date="2003" name="Nature">
        <title>Global analysis of protein expression in yeast.</title>
        <authorList>
            <person name="Ghaemmaghami S."/>
            <person name="Huh W.-K."/>
            <person name="Bower K."/>
            <person name="Howson R.W."/>
            <person name="Belle A."/>
            <person name="Dephoure N."/>
            <person name="O'Shea E.K."/>
            <person name="Weissman J.S."/>
        </authorList>
    </citation>
    <scope>LEVEL OF PROTEIN EXPRESSION [LARGE SCALE ANALYSIS]</scope>
</reference>
<reference key="6">
    <citation type="journal article" date="2004" name="Proc. Natl. Acad. Sci. U.S.A.">
        <title>Regulation of chromosome stability by the histone H2A variant Htz1, the Swr1 chromatin remodeling complex, and the histone acetyltransferase NuA4.</title>
        <authorList>
            <person name="Krogan N.J."/>
            <person name="Baetz K."/>
            <person name="Keogh M.-C."/>
            <person name="Datta N."/>
            <person name="Sawa C."/>
            <person name="Kwok T.C.Y."/>
            <person name="Thompson N.J."/>
            <person name="Davey M.G."/>
            <person name="Pootoolal J."/>
            <person name="Hughes T.R."/>
            <person name="Emili A."/>
            <person name="Buratowski S."/>
            <person name="Hieter P."/>
            <person name="Greenblatt J.F."/>
        </authorList>
    </citation>
    <scope>IDENTIFICATION IN THE NUA4 COMPLEX</scope>
    <scope>IDENTIFICATION BY MASS SPECTROMETRY</scope>
</reference>
<reference key="7">
    <citation type="journal article" date="2007" name="Proc. Natl. Acad. Sci. U.S.A.">
        <title>Analysis of phosphorylation sites on proteins from Saccharomyces cerevisiae by electron transfer dissociation (ETD) mass spectrometry.</title>
        <authorList>
            <person name="Chi A."/>
            <person name="Huttenhower C."/>
            <person name="Geer L.Y."/>
            <person name="Coon J.J."/>
            <person name="Syka J.E.P."/>
            <person name="Bai D.L."/>
            <person name="Shabanowitz J."/>
            <person name="Burke D.J."/>
            <person name="Troyanskaya O.G."/>
            <person name="Hunt D.F."/>
        </authorList>
    </citation>
    <scope>PHOSPHORYLATION [LARGE SCALE ANALYSIS] AT SER-225</scope>
    <scope>IDENTIFICATION BY MASS SPECTROMETRY [LARGE SCALE ANALYSIS]</scope>
</reference>
<reference key="8">
    <citation type="journal article" date="2008" name="Mol. Cell. Proteomics">
        <title>A multidimensional chromatography technology for in-depth phosphoproteome analysis.</title>
        <authorList>
            <person name="Albuquerque C.P."/>
            <person name="Smolka M.B."/>
            <person name="Payne S.H."/>
            <person name="Bafna V."/>
            <person name="Eng J."/>
            <person name="Zhou H."/>
        </authorList>
    </citation>
    <scope>PHOSPHORYLATION [LARGE SCALE ANALYSIS] AT SER-200</scope>
    <scope>IDENTIFICATION BY MASS SPECTROMETRY [LARGE SCALE ANALYSIS]</scope>
</reference>
<name>EAF7_YEAST</name>
<feature type="chain" id="PRO_0000215882" description="Chromatin modification-related protein EAF7">
    <location>
        <begin position="1"/>
        <end position="425"/>
    </location>
</feature>
<feature type="region of interest" description="Disordered" evidence="2">
    <location>
        <begin position="143"/>
        <end position="425"/>
    </location>
</feature>
<feature type="coiled-coil region" evidence="1">
    <location>
        <begin position="209"/>
        <end position="310"/>
    </location>
</feature>
<feature type="compositionally biased region" description="Basic and acidic residues" evidence="2">
    <location>
        <begin position="149"/>
        <end position="163"/>
    </location>
</feature>
<feature type="compositionally biased region" description="Basic and acidic residues" evidence="2">
    <location>
        <begin position="172"/>
        <end position="197"/>
    </location>
</feature>
<feature type="compositionally biased region" description="Basic and acidic residues" evidence="2">
    <location>
        <begin position="204"/>
        <end position="231"/>
    </location>
</feature>
<feature type="compositionally biased region" description="Acidic residues" evidence="2">
    <location>
        <begin position="255"/>
        <end position="269"/>
    </location>
</feature>
<feature type="compositionally biased region" description="Basic and acidic residues" evidence="2">
    <location>
        <begin position="270"/>
        <end position="309"/>
    </location>
</feature>
<feature type="compositionally biased region" description="Acidic residues" evidence="2">
    <location>
        <begin position="320"/>
        <end position="332"/>
    </location>
</feature>
<feature type="compositionally biased region" description="Basic and acidic residues" evidence="2">
    <location>
        <begin position="333"/>
        <end position="346"/>
    </location>
</feature>
<feature type="compositionally biased region" description="Basic and acidic residues" evidence="2">
    <location>
        <begin position="354"/>
        <end position="380"/>
    </location>
</feature>
<feature type="compositionally biased region" description="Low complexity" evidence="2">
    <location>
        <begin position="386"/>
        <end position="396"/>
    </location>
</feature>
<feature type="compositionally biased region" description="Polar residues" evidence="2">
    <location>
        <begin position="408"/>
        <end position="418"/>
    </location>
</feature>
<feature type="modified residue" description="Phosphoserine" evidence="8">
    <location>
        <position position="200"/>
    </location>
</feature>
<feature type="modified residue" description="Phosphoserine" evidence="7">
    <location>
        <position position="225"/>
    </location>
</feature>
<feature type="helix" evidence="9">
    <location>
        <begin position="113"/>
        <end position="116"/>
    </location>
</feature>
<feature type="helix" evidence="9">
    <location>
        <begin position="129"/>
        <end position="141"/>
    </location>
</feature>
<sequence length="425" mass="49391">MVVHWTIVDEIRLLRWASEFKPAGIHKHFHMFCIVERMNSPDKYPVTLLQKETMKLGKVFTAKDIWDKLSQSYNLEKIDEMENTYSLEATTESSRNGNGNGDDAEIHEETLLELNNRIRVRKQDFTLPWEEYGELILENARKSPNSNEEYPRVEDMNEKDSTIPKESPSTDLKNDNNKQEKNATIKVKELPEYHTEENDSPIDVQKEPIKEVQSDEKELQREHMSEEEQKMKSTNKTAAPVRKSQRLKRSKEVKFEDEEKEEIEEDNTKDEEQKEKKEEIQEPKITHNEEVDKEKNENEEGDDEREKSTSYENTNGSESEGVDEGVDEELGYESEREAEGKGKQIESEGGNLKKKTENKKGDDQQDDTKKDSKDKNEPLAKRTRHSSSTGNTSNETSPKRKRRKAGSRKNSPPATRVSSRLRNKK</sequence>
<proteinExistence type="evidence at protein level"/>
<organism>
    <name type="scientific">Saccharomyces cerevisiae (strain ATCC 204508 / S288c)</name>
    <name type="common">Baker's yeast</name>
    <dbReference type="NCBI Taxonomy" id="559292"/>
    <lineage>
        <taxon>Eukaryota</taxon>
        <taxon>Fungi</taxon>
        <taxon>Dikarya</taxon>
        <taxon>Ascomycota</taxon>
        <taxon>Saccharomycotina</taxon>
        <taxon>Saccharomycetes</taxon>
        <taxon>Saccharomycetales</taxon>
        <taxon>Saccharomycetaceae</taxon>
        <taxon>Saccharomyces</taxon>
    </lineage>
</organism>
<gene>
    <name type="primary">EAF7</name>
    <name type="ordered locus">YNL136W</name>
    <name type="ORF">N1212</name>
    <name type="ORF">N1843</name>
</gene>